<reference key="1">
    <citation type="journal article" date="1998" name="J. Mol. Biol.">
        <title>Genome structure of mycobacteriophage D29: implications for phage evolution.</title>
        <authorList>
            <person name="Ford M.E."/>
            <person name="Sarkis G.J."/>
            <person name="Belanger A.E."/>
            <person name="Hendrix R.W."/>
            <person name="Hatfull G.F."/>
        </authorList>
    </citation>
    <scope>NUCLEOTIDE SEQUENCE [LARGE SCALE GENOMIC DNA]</scope>
</reference>
<protein>
    <recommendedName>
        <fullName>Gene 21 protein</fullName>
    </recommendedName>
    <alternativeName>
        <fullName>Gp21</fullName>
    </alternativeName>
</protein>
<proteinExistence type="predicted"/>
<name>VG21_BPMD2</name>
<organism>
    <name type="scientific">Mycobacterium phage D29</name>
    <name type="common">Mycobacteriophage D29</name>
    <dbReference type="NCBI Taxonomy" id="28369"/>
    <lineage>
        <taxon>Viruses</taxon>
        <taxon>Duplodnaviria</taxon>
        <taxon>Heunggongvirae</taxon>
        <taxon>Uroviricota</taxon>
        <taxon>Caudoviricetes</taxon>
        <taxon>Fromanvirus</taxon>
    </lineage>
</organism>
<feature type="chain" id="PRO_0000164730" description="Gene 21 protein">
    <location>
        <begin position="1"/>
        <end position="111"/>
    </location>
</feature>
<sequence>MAKVYANANKVAARHVDVRKRVKEERDGVTRRARTNLARANKTTRITKEGYFPASIEEVDGDVDFHTVLHAPNAFALEFGHAPSGFFAGTDTKPPDPEYILTRAAIGGTVS</sequence>
<organismHost>
    <name type="scientific">Mycobacterium</name>
    <dbReference type="NCBI Taxonomy" id="1763"/>
</organismHost>
<dbReference type="EMBL" id="AF022214">
    <property type="protein sequence ID" value="AAC18462.1"/>
    <property type="molecule type" value="Genomic_DNA"/>
</dbReference>
<dbReference type="PIR" id="C72802">
    <property type="entry name" value="C72802"/>
</dbReference>
<dbReference type="RefSeq" id="NP_046837.1">
    <property type="nucleotide sequence ID" value="NC_001900.1"/>
</dbReference>
<dbReference type="GeneID" id="1261628"/>
<dbReference type="KEGG" id="vg:1261628"/>
<dbReference type="OrthoDB" id="14428at10239"/>
<dbReference type="Proteomes" id="UP000002131">
    <property type="component" value="Segment"/>
</dbReference>
<dbReference type="InterPro" id="IPR039452">
    <property type="entry name" value="DUF5403"/>
</dbReference>
<dbReference type="Pfam" id="PF17395">
    <property type="entry name" value="DUF5403"/>
    <property type="match status" value="1"/>
</dbReference>
<gene>
    <name type="primary">21</name>
</gene>
<accession>O64215</accession>
<keyword id="KW-1185">Reference proteome</keyword>